<reference key="1">
    <citation type="submission" date="2004-04" db="EMBL/GenBank/DDBJ databases">
        <title>Molecular phylogenetics and diversification of South American grass mice, genus Akodon.</title>
        <authorList>
            <person name="Smith M.F."/>
            <person name="Patton J.L."/>
        </authorList>
    </citation>
    <scope>NUCLEOTIDE SEQUENCE [GENOMIC DNA]</scope>
</reference>
<comment type="function">
    <text evidence="2">Component of the ubiquinol-cytochrome c reductase complex (complex III or cytochrome b-c1 complex) that is part of the mitochondrial respiratory chain. The b-c1 complex mediates electron transfer from ubiquinol to cytochrome c. Contributes to the generation of a proton gradient across the mitochondrial membrane that is then used for ATP synthesis.</text>
</comment>
<comment type="cofactor">
    <cofactor evidence="2">
        <name>heme b</name>
        <dbReference type="ChEBI" id="CHEBI:60344"/>
    </cofactor>
    <text evidence="2">Binds 2 heme b groups non-covalently.</text>
</comment>
<comment type="subunit">
    <text evidence="2">The cytochrome bc1 complex contains 11 subunits: 3 respiratory subunits (MT-CYB, CYC1 and UQCRFS1), 2 core proteins (UQCRC1 and UQCRC2) and 6 low-molecular weight proteins (UQCRH/QCR6, UQCRB/QCR7, UQCRQ/QCR8, UQCR10/QCR9, UQCR11/QCR10 and a cleavage product of UQCRFS1). This cytochrome bc1 complex then forms a dimer.</text>
</comment>
<comment type="subcellular location">
    <subcellularLocation>
        <location evidence="2">Mitochondrion inner membrane</location>
        <topology evidence="2">Multi-pass membrane protein</topology>
    </subcellularLocation>
</comment>
<comment type="miscellaneous">
    <text evidence="1">Heme 1 (or BL or b562) is low-potential and absorbs at about 562 nm, and heme 2 (or BH or b566) is high-potential and absorbs at about 566 nm.</text>
</comment>
<comment type="similarity">
    <text evidence="3 4">Belongs to the cytochrome b family.</text>
</comment>
<comment type="caution">
    <text evidence="2">The full-length protein contains only eight transmembrane helices, not nine as predicted by bioinformatics tools.</text>
</comment>
<geneLocation type="mitochondrion"/>
<name>CYB_AKOBU</name>
<sequence length="379" mass="42523">MKILRKNHPLLKIVNHSFIDLPTPSNISSWWNFGSLLGVCLIIQILTGLFLAMHYTSDTTTAFSSVAHICRDVNYGWLIRYLHANGASMFFICLFIHVGRGIYYGSYVLSETWNIGIILFLTTMATAFVGYVLPWGQMSFWGATVITNLLSAVPYIGSTLVEWIWGGFSVDKATLTRFFAFHFILPFIITAFALVHLLFLHETGSNNPSGLNSDSDKIPFHPYYTIKDLLGIFLLLMALMILALFFPDVLGDPDNFTPANPLNTPAHIKPEWYFLFAYAILRSIPNKLGGVLALILSILILAAFPLLNTSKQHGLIFRPVTQAIYWTFIANLLVLTWIGGQPVEYPFTTIGQIASITYFTIIIILMPVSNTIENNIIKL</sequence>
<keyword id="KW-0249">Electron transport</keyword>
<keyword id="KW-0349">Heme</keyword>
<keyword id="KW-0408">Iron</keyword>
<keyword id="KW-0472">Membrane</keyword>
<keyword id="KW-0479">Metal-binding</keyword>
<keyword id="KW-0496">Mitochondrion</keyword>
<keyword id="KW-0999">Mitochondrion inner membrane</keyword>
<keyword id="KW-0679">Respiratory chain</keyword>
<keyword id="KW-0812">Transmembrane</keyword>
<keyword id="KW-1133">Transmembrane helix</keyword>
<keyword id="KW-0813">Transport</keyword>
<keyword id="KW-0830">Ubiquinone</keyword>
<gene>
    <name type="primary">MT-CYB</name>
    <name type="synonym">COB</name>
    <name type="synonym">CYTB</name>
    <name type="synonym">MTCYB</name>
</gene>
<protein>
    <recommendedName>
        <fullName>Cytochrome b</fullName>
    </recommendedName>
    <alternativeName>
        <fullName>Complex III subunit 3</fullName>
    </alternativeName>
    <alternativeName>
        <fullName>Complex III subunit III</fullName>
    </alternativeName>
    <alternativeName>
        <fullName>Cytochrome b-c1 complex subunit 3</fullName>
    </alternativeName>
    <alternativeName>
        <fullName>Ubiquinol-cytochrome-c reductase complex cytochrome b subunit</fullName>
    </alternativeName>
</protein>
<accession>Q5QFW5</accession>
<evidence type="ECO:0000250" key="1"/>
<evidence type="ECO:0000250" key="2">
    <source>
        <dbReference type="UniProtKB" id="P00157"/>
    </source>
</evidence>
<evidence type="ECO:0000255" key="3">
    <source>
        <dbReference type="PROSITE-ProRule" id="PRU00967"/>
    </source>
</evidence>
<evidence type="ECO:0000255" key="4">
    <source>
        <dbReference type="PROSITE-ProRule" id="PRU00968"/>
    </source>
</evidence>
<feature type="chain" id="PRO_0000060542" description="Cytochrome b">
    <location>
        <begin position="1"/>
        <end position="379"/>
    </location>
</feature>
<feature type="transmembrane region" description="Helical" evidence="2">
    <location>
        <begin position="33"/>
        <end position="53"/>
    </location>
</feature>
<feature type="transmembrane region" description="Helical" evidence="2">
    <location>
        <begin position="77"/>
        <end position="98"/>
    </location>
</feature>
<feature type="transmembrane region" description="Helical" evidence="2">
    <location>
        <begin position="113"/>
        <end position="133"/>
    </location>
</feature>
<feature type="transmembrane region" description="Helical" evidence="2">
    <location>
        <begin position="178"/>
        <end position="198"/>
    </location>
</feature>
<feature type="transmembrane region" description="Helical" evidence="2">
    <location>
        <begin position="226"/>
        <end position="246"/>
    </location>
</feature>
<feature type="transmembrane region" description="Helical" evidence="2">
    <location>
        <begin position="288"/>
        <end position="308"/>
    </location>
</feature>
<feature type="transmembrane region" description="Helical" evidence="2">
    <location>
        <begin position="320"/>
        <end position="340"/>
    </location>
</feature>
<feature type="transmembrane region" description="Helical" evidence="2">
    <location>
        <begin position="347"/>
        <end position="367"/>
    </location>
</feature>
<feature type="binding site" description="axial binding residue" evidence="2">
    <location>
        <position position="83"/>
    </location>
    <ligand>
        <name>heme b</name>
        <dbReference type="ChEBI" id="CHEBI:60344"/>
        <label>b562</label>
    </ligand>
    <ligandPart>
        <name>Fe</name>
        <dbReference type="ChEBI" id="CHEBI:18248"/>
    </ligandPart>
</feature>
<feature type="binding site" description="axial binding residue" evidence="2">
    <location>
        <position position="97"/>
    </location>
    <ligand>
        <name>heme b</name>
        <dbReference type="ChEBI" id="CHEBI:60344"/>
        <label>b566</label>
    </ligand>
    <ligandPart>
        <name>Fe</name>
        <dbReference type="ChEBI" id="CHEBI:18248"/>
    </ligandPart>
</feature>
<feature type="binding site" description="axial binding residue" evidence="2">
    <location>
        <position position="182"/>
    </location>
    <ligand>
        <name>heme b</name>
        <dbReference type="ChEBI" id="CHEBI:60344"/>
        <label>b562</label>
    </ligand>
    <ligandPart>
        <name>Fe</name>
        <dbReference type="ChEBI" id="CHEBI:18248"/>
    </ligandPart>
</feature>
<feature type="binding site" description="axial binding residue" evidence="2">
    <location>
        <position position="196"/>
    </location>
    <ligand>
        <name>heme b</name>
        <dbReference type="ChEBI" id="CHEBI:60344"/>
        <label>b566</label>
    </ligand>
    <ligandPart>
        <name>Fe</name>
        <dbReference type="ChEBI" id="CHEBI:18248"/>
    </ligandPart>
</feature>
<feature type="binding site" evidence="2">
    <location>
        <position position="201"/>
    </location>
    <ligand>
        <name>a ubiquinone</name>
        <dbReference type="ChEBI" id="CHEBI:16389"/>
    </ligand>
</feature>
<dbReference type="EMBL" id="AY605060">
    <property type="protein sequence ID" value="AAU05736.1"/>
    <property type="molecule type" value="Genomic_DNA"/>
</dbReference>
<dbReference type="SMR" id="Q5QFW5"/>
<dbReference type="GO" id="GO:0005743">
    <property type="term" value="C:mitochondrial inner membrane"/>
    <property type="evidence" value="ECO:0007669"/>
    <property type="project" value="UniProtKB-SubCell"/>
</dbReference>
<dbReference type="GO" id="GO:0045275">
    <property type="term" value="C:respiratory chain complex III"/>
    <property type="evidence" value="ECO:0007669"/>
    <property type="project" value="InterPro"/>
</dbReference>
<dbReference type="GO" id="GO:0046872">
    <property type="term" value="F:metal ion binding"/>
    <property type="evidence" value="ECO:0007669"/>
    <property type="project" value="UniProtKB-KW"/>
</dbReference>
<dbReference type="GO" id="GO:0008121">
    <property type="term" value="F:ubiquinol-cytochrome-c reductase activity"/>
    <property type="evidence" value="ECO:0007669"/>
    <property type="project" value="InterPro"/>
</dbReference>
<dbReference type="GO" id="GO:0006122">
    <property type="term" value="P:mitochondrial electron transport, ubiquinol to cytochrome c"/>
    <property type="evidence" value="ECO:0007669"/>
    <property type="project" value="TreeGrafter"/>
</dbReference>
<dbReference type="CDD" id="cd00290">
    <property type="entry name" value="cytochrome_b_C"/>
    <property type="match status" value="1"/>
</dbReference>
<dbReference type="CDD" id="cd00284">
    <property type="entry name" value="Cytochrome_b_N"/>
    <property type="match status" value="1"/>
</dbReference>
<dbReference type="FunFam" id="1.20.810.10:FF:000002">
    <property type="entry name" value="Cytochrome b"/>
    <property type="match status" value="1"/>
</dbReference>
<dbReference type="Gene3D" id="1.20.810.10">
    <property type="entry name" value="Cytochrome Bc1 Complex, Chain C"/>
    <property type="match status" value="1"/>
</dbReference>
<dbReference type="InterPro" id="IPR005798">
    <property type="entry name" value="Cyt_b/b6_C"/>
</dbReference>
<dbReference type="InterPro" id="IPR036150">
    <property type="entry name" value="Cyt_b/b6_C_sf"/>
</dbReference>
<dbReference type="InterPro" id="IPR005797">
    <property type="entry name" value="Cyt_b/b6_N"/>
</dbReference>
<dbReference type="InterPro" id="IPR027387">
    <property type="entry name" value="Cytb/b6-like_sf"/>
</dbReference>
<dbReference type="InterPro" id="IPR030689">
    <property type="entry name" value="Cytochrome_b"/>
</dbReference>
<dbReference type="InterPro" id="IPR048260">
    <property type="entry name" value="Cytochrome_b_C_euk/bac"/>
</dbReference>
<dbReference type="InterPro" id="IPR048259">
    <property type="entry name" value="Cytochrome_b_N_euk/bac"/>
</dbReference>
<dbReference type="InterPro" id="IPR016174">
    <property type="entry name" value="Di-haem_cyt_TM"/>
</dbReference>
<dbReference type="PANTHER" id="PTHR19271">
    <property type="entry name" value="CYTOCHROME B"/>
    <property type="match status" value="1"/>
</dbReference>
<dbReference type="PANTHER" id="PTHR19271:SF16">
    <property type="entry name" value="CYTOCHROME B"/>
    <property type="match status" value="1"/>
</dbReference>
<dbReference type="Pfam" id="PF00032">
    <property type="entry name" value="Cytochrom_B_C"/>
    <property type="match status" value="1"/>
</dbReference>
<dbReference type="Pfam" id="PF00033">
    <property type="entry name" value="Cytochrome_B"/>
    <property type="match status" value="1"/>
</dbReference>
<dbReference type="PIRSF" id="PIRSF038885">
    <property type="entry name" value="COB"/>
    <property type="match status" value="1"/>
</dbReference>
<dbReference type="SUPFAM" id="SSF81648">
    <property type="entry name" value="a domain/subunit of cytochrome bc1 complex (Ubiquinol-cytochrome c reductase)"/>
    <property type="match status" value="1"/>
</dbReference>
<dbReference type="SUPFAM" id="SSF81342">
    <property type="entry name" value="Transmembrane di-heme cytochromes"/>
    <property type="match status" value="1"/>
</dbReference>
<dbReference type="PROSITE" id="PS51003">
    <property type="entry name" value="CYTB_CTER"/>
    <property type="match status" value="1"/>
</dbReference>
<dbReference type="PROSITE" id="PS51002">
    <property type="entry name" value="CYTB_NTER"/>
    <property type="match status" value="1"/>
</dbReference>
<organism>
    <name type="scientific">Akodon budini</name>
    <name type="common">Budin's grass mouse</name>
    <dbReference type="NCBI Taxonomy" id="291114"/>
    <lineage>
        <taxon>Eukaryota</taxon>
        <taxon>Metazoa</taxon>
        <taxon>Chordata</taxon>
        <taxon>Craniata</taxon>
        <taxon>Vertebrata</taxon>
        <taxon>Euteleostomi</taxon>
        <taxon>Mammalia</taxon>
        <taxon>Eutheria</taxon>
        <taxon>Euarchontoglires</taxon>
        <taxon>Glires</taxon>
        <taxon>Rodentia</taxon>
        <taxon>Myomorpha</taxon>
        <taxon>Muroidea</taxon>
        <taxon>Cricetidae</taxon>
        <taxon>Sigmodontinae</taxon>
        <taxon>Akodon</taxon>
    </lineage>
</organism>
<proteinExistence type="inferred from homology"/>